<proteinExistence type="inferred from homology"/>
<keyword id="KW-0010">Activator</keyword>
<keyword id="KW-0238">DNA-binding</keyword>
<keyword id="KW-0312">Gluconeogenesis</keyword>
<keyword id="KW-0479">Metal-binding</keyword>
<keyword id="KW-0539">Nucleus</keyword>
<keyword id="KW-1185">Reference proteome</keyword>
<keyword id="KW-0804">Transcription</keyword>
<keyword id="KW-0805">Transcription regulation</keyword>
<keyword id="KW-0862">Zinc</keyword>
<name>ACUK_PODAN</name>
<accession>B2AR36</accession>
<accession>A0A090CQ30</accession>
<sequence length="682" mass="75181">MPEDGGPFGSEAAEASGAMSETENEYDDHEPHHKDEDDRMSEQNTTPDGVDAGGEVKKKYDPKDPLRPRRKKARRACYACQRAHLTCGDERPCQRCIKRGLQDSCQDGVRKKAKYLHDAPPEALRPVLGPNYNPNAPSSRHGGQRHHSVSTDASTVRTFFSHSNASQYPVYSSTQSIPHGLTESLPFNSQQSPVSPTFQQTSSNPPISGMVAPPVSSPMTPFGLPFDPSDPNIFNFNIDGLNFGSHYGAMEFGMLGHMSSSAADTPPQESGMGQQPGDVHFGAGLFGSHFDNRMLPEFLGLDAGANGIYSQGNLQHGLPHAYAIPAGPTSLQSPSTENNSPQPTTFGFDDRPSPTMSQYPNAPGAKSSSNSRPSKLRKLDKVAILQKRQRDPSYIYDTVKKSFDYVGSFHKLFEVLSSRFSQPHAARIAKSLAAIRPALLASTRNLTTQDLIFMEQCFQRTLFEYEDFMTQSSSPTLACRRTGEIAGVNKEFTALTGWTKDVLLGKEPNRNTNLGGTGVRTTPRLKSLNESSAENGGAASGPRPVFLAELMDHESAVEFYEDYSQLAFGDSRGRMTRKCRLLKYRTDKPAAGGGGGAGEEERKPDPSAAPRQQEKDSRHSILSNRVAKIDGEHGISKLERDGKLECSYTWTIKRDMFDMPMLFVINVRFFFFFDDYYGRRHC</sequence>
<reference key="1">
    <citation type="journal article" date="2008" name="Genome Biol.">
        <title>The genome sequence of the model ascomycete fungus Podospora anserina.</title>
        <authorList>
            <person name="Espagne E."/>
            <person name="Lespinet O."/>
            <person name="Malagnac F."/>
            <person name="Da Silva C."/>
            <person name="Jaillon O."/>
            <person name="Porcel B.M."/>
            <person name="Couloux A."/>
            <person name="Aury J.-M."/>
            <person name="Segurens B."/>
            <person name="Poulain J."/>
            <person name="Anthouard V."/>
            <person name="Grossetete S."/>
            <person name="Khalili H."/>
            <person name="Coppin E."/>
            <person name="Dequard-Chablat M."/>
            <person name="Picard M."/>
            <person name="Contamine V."/>
            <person name="Arnaise S."/>
            <person name="Bourdais A."/>
            <person name="Berteaux-Lecellier V."/>
            <person name="Gautheret D."/>
            <person name="de Vries R.P."/>
            <person name="Battaglia E."/>
            <person name="Coutinho P.M."/>
            <person name="Danchin E.G.J."/>
            <person name="Henrissat B."/>
            <person name="El Khoury R."/>
            <person name="Sainsard-Chanet A."/>
            <person name="Boivin A."/>
            <person name="Pinan-Lucarre B."/>
            <person name="Sellem C.H."/>
            <person name="Debuchy R."/>
            <person name="Wincker P."/>
            <person name="Weissenbach J."/>
            <person name="Silar P."/>
        </authorList>
    </citation>
    <scope>NUCLEOTIDE SEQUENCE [LARGE SCALE GENOMIC DNA]</scope>
    <source>
        <strain>S / ATCC MYA-4624 / DSM 980 / FGSC 10383</strain>
    </source>
</reference>
<reference key="2">
    <citation type="journal article" date="2014" name="Genetics">
        <title>Maintaining two mating types: Structure of the mating type locus and its role in heterokaryosis in Podospora anserina.</title>
        <authorList>
            <person name="Grognet P."/>
            <person name="Bidard F."/>
            <person name="Kuchly C."/>
            <person name="Tong L.C.H."/>
            <person name="Coppin E."/>
            <person name="Benkhali J.A."/>
            <person name="Couloux A."/>
            <person name="Wincker P."/>
            <person name="Debuchy R."/>
            <person name="Silar P."/>
        </authorList>
    </citation>
    <scope>GENOME REANNOTATION</scope>
    <source>
        <strain>S / ATCC MYA-4624 / DSM 980 / FGSC 10383</strain>
    </source>
</reference>
<evidence type="ECO:0000250" key="1"/>
<evidence type="ECO:0000255" key="2">
    <source>
        <dbReference type="PROSITE-ProRule" id="PRU00227"/>
    </source>
</evidence>
<evidence type="ECO:0000256" key="3">
    <source>
        <dbReference type="SAM" id="MobiDB-lite"/>
    </source>
</evidence>
<evidence type="ECO:0000305" key="4"/>
<comment type="function">
    <text evidence="1">Transcription factor which regulates nonfermentable carbon utilization. Activator of gluconeogenetic genes (By similarity).</text>
</comment>
<comment type="subcellular location">
    <subcellularLocation>
        <location evidence="2">Nucleus</location>
    </subcellularLocation>
</comment>
<comment type="similarity">
    <text evidence="4">Belongs to the ERT1/acuK family.</text>
</comment>
<comment type="sequence caution" evidence="4">
    <conflict type="frameshift">
        <sequence resource="EMBL-CDS" id="CAP66614"/>
    </conflict>
</comment>
<gene>
    <name type="ordered locus">Pa_4_8760</name>
    <name type="ORF">PODANS_4_8760</name>
</gene>
<protein>
    <recommendedName>
        <fullName>Transcription activator of gluconeogenesis PODANS_4_8760</fullName>
    </recommendedName>
</protein>
<dbReference type="EMBL" id="CU633895">
    <property type="protein sequence ID" value="CAP66614.1"/>
    <property type="status" value="ALT_FRAME"/>
    <property type="molecule type" value="Genomic_DNA"/>
</dbReference>
<dbReference type="EMBL" id="FO904939">
    <property type="protein sequence ID" value="CDP28349.1"/>
    <property type="molecule type" value="Genomic_DNA"/>
</dbReference>
<dbReference type="RefSeq" id="XP_001905948.1">
    <property type="nucleotide sequence ID" value="XM_001905913.1"/>
</dbReference>
<dbReference type="SMR" id="B2AR36"/>
<dbReference type="FunCoup" id="B2AR36">
    <property type="interactions" value="190"/>
</dbReference>
<dbReference type="GeneID" id="6190033"/>
<dbReference type="KEGG" id="pan:PODANSg2976"/>
<dbReference type="eggNOG" id="ENOG502R1M5">
    <property type="taxonomic scope" value="Eukaryota"/>
</dbReference>
<dbReference type="HOGENOM" id="CLU_010748_1_0_1"/>
<dbReference type="InParanoid" id="B2AR36"/>
<dbReference type="OrthoDB" id="2538135at2759"/>
<dbReference type="Proteomes" id="UP000001197">
    <property type="component" value="Chromosome 4"/>
</dbReference>
<dbReference type="GO" id="GO:0005634">
    <property type="term" value="C:nucleus"/>
    <property type="evidence" value="ECO:0007669"/>
    <property type="project" value="UniProtKB-SubCell"/>
</dbReference>
<dbReference type="GO" id="GO:0000981">
    <property type="term" value="F:DNA-binding transcription factor activity, RNA polymerase II-specific"/>
    <property type="evidence" value="ECO:0007669"/>
    <property type="project" value="InterPro"/>
</dbReference>
<dbReference type="GO" id="GO:0000977">
    <property type="term" value="F:RNA polymerase II transcription regulatory region sequence-specific DNA binding"/>
    <property type="evidence" value="ECO:0007669"/>
    <property type="project" value="TreeGrafter"/>
</dbReference>
<dbReference type="GO" id="GO:0008270">
    <property type="term" value="F:zinc ion binding"/>
    <property type="evidence" value="ECO:0007669"/>
    <property type="project" value="InterPro"/>
</dbReference>
<dbReference type="GO" id="GO:0009267">
    <property type="term" value="P:cellular response to starvation"/>
    <property type="evidence" value="ECO:0007669"/>
    <property type="project" value="TreeGrafter"/>
</dbReference>
<dbReference type="GO" id="GO:0006094">
    <property type="term" value="P:gluconeogenesis"/>
    <property type="evidence" value="ECO:0007669"/>
    <property type="project" value="UniProtKB-KW"/>
</dbReference>
<dbReference type="CDD" id="cd00067">
    <property type="entry name" value="GAL4"/>
    <property type="match status" value="1"/>
</dbReference>
<dbReference type="Gene3D" id="4.10.240.10">
    <property type="entry name" value="Zn(2)-C6 fungal-type DNA-binding domain"/>
    <property type="match status" value="1"/>
</dbReference>
<dbReference type="InterPro" id="IPR050335">
    <property type="entry name" value="ERT1_acuK_gluconeogen_tf"/>
</dbReference>
<dbReference type="InterPro" id="IPR056751">
    <property type="entry name" value="PAS_13"/>
</dbReference>
<dbReference type="InterPro" id="IPR036864">
    <property type="entry name" value="Zn2-C6_fun-type_DNA-bd_sf"/>
</dbReference>
<dbReference type="InterPro" id="IPR001138">
    <property type="entry name" value="Zn2Cys6_DnaBD"/>
</dbReference>
<dbReference type="PANTHER" id="PTHR47659:SF1">
    <property type="entry name" value="TRANSCRIPTION ACTIVATOR OF GLUCONEOGENESIS ERT1"/>
    <property type="match status" value="1"/>
</dbReference>
<dbReference type="PANTHER" id="PTHR47659">
    <property type="entry name" value="ZN(II)2CYS6 TRANSCRIPTION FACTOR (EUROFUNG)-RELATED"/>
    <property type="match status" value="1"/>
</dbReference>
<dbReference type="Pfam" id="PF24990">
    <property type="entry name" value="PAS_13"/>
    <property type="match status" value="1"/>
</dbReference>
<dbReference type="SMART" id="SM00066">
    <property type="entry name" value="GAL4"/>
    <property type="match status" value="1"/>
</dbReference>
<dbReference type="SUPFAM" id="SSF57701">
    <property type="entry name" value="Zn2/Cys6 DNA-binding domain"/>
    <property type="match status" value="1"/>
</dbReference>
<dbReference type="PROSITE" id="PS50048">
    <property type="entry name" value="ZN2_CY6_FUNGAL_2"/>
    <property type="match status" value="1"/>
</dbReference>
<feature type="chain" id="PRO_0000406449" description="Transcription activator of gluconeogenesis PODANS_4_8760">
    <location>
        <begin position="1"/>
        <end position="682"/>
    </location>
</feature>
<feature type="DNA-binding region" description="Zn(2)-C6 fungal-type" evidence="2">
    <location>
        <begin position="77"/>
        <end position="105"/>
    </location>
</feature>
<feature type="region of interest" description="Disordered" evidence="3">
    <location>
        <begin position="1"/>
        <end position="72"/>
    </location>
</feature>
<feature type="region of interest" description="Disordered" evidence="3">
    <location>
        <begin position="122"/>
        <end position="148"/>
    </location>
</feature>
<feature type="region of interest" description="Disordered" evidence="3">
    <location>
        <begin position="181"/>
        <end position="211"/>
    </location>
</feature>
<feature type="region of interest" description="Disordered" evidence="3">
    <location>
        <begin position="325"/>
        <end position="375"/>
    </location>
</feature>
<feature type="region of interest" description="Disordered" evidence="3">
    <location>
        <begin position="509"/>
        <end position="541"/>
    </location>
</feature>
<feature type="region of interest" description="Disordered" evidence="3">
    <location>
        <begin position="586"/>
        <end position="622"/>
    </location>
</feature>
<feature type="compositionally biased region" description="Low complexity" evidence="3">
    <location>
        <begin position="9"/>
        <end position="21"/>
    </location>
</feature>
<feature type="compositionally biased region" description="Basic and acidic residues" evidence="3">
    <location>
        <begin position="29"/>
        <end position="41"/>
    </location>
</feature>
<feature type="compositionally biased region" description="Basic and acidic residues" evidence="3">
    <location>
        <begin position="54"/>
        <end position="67"/>
    </location>
</feature>
<feature type="compositionally biased region" description="Polar residues" evidence="3">
    <location>
        <begin position="185"/>
        <end position="206"/>
    </location>
</feature>
<feature type="compositionally biased region" description="Polar residues" evidence="3">
    <location>
        <begin position="329"/>
        <end position="345"/>
    </location>
</feature>
<feature type="compositionally biased region" description="Polar residues" evidence="3">
    <location>
        <begin position="354"/>
        <end position="373"/>
    </location>
</feature>
<organism>
    <name type="scientific">Podospora anserina (strain S / ATCC MYA-4624 / DSM 980 / FGSC 10383)</name>
    <name type="common">Pleurage anserina</name>
    <dbReference type="NCBI Taxonomy" id="515849"/>
    <lineage>
        <taxon>Eukaryota</taxon>
        <taxon>Fungi</taxon>
        <taxon>Dikarya</taxon>
        <taxon>Ascomycota</taxon>
        <taxon>Pezizomycotina</taxon>
        <taxon>Sordariomycetes</taxon>
        <taxon>Sordariomycetidae</taxon>
        <taxon>Sordariales</taxon>
        <taxon>Podosporaceae</taxon>
        <taxon>Podospora</taxon>
        <taxon>Podospora anserina</taxon>
    </lineage>
</organism>